<name>S35A5_DANRE</name>
<gene>
    <name type="primary">slc35a5</name>
    <name type="ORF">si:bZ20I5.1</name>
    <name type="ORF">zgc:66231</name>
</gene>
<keyword id="KW-0050">Antiport</keyword>
<keyword id="KW-0325">Glycoprotein</keyword>
<keyword id="KW-0333">Golgi apparatus</keyword>
<keyword id="KW-0472">Membrane</keyword>
<keyword id="KW-1185">Reference proteome</keyword>
<keyword id="KW-0762">Sugar transport</keyword>
<keyword id="KW-0812">Transmembrane</keyword>
<keyword id="KW-1133">Transmembrane helix</keyword>
<keyword id="KW-0813">Transport</keyword>
<sequence length="440" mass="49544">MSFTMARYSSSSSSASSSSCGCCRPCSRICSRSSAYTLALGLGFVTLGTSRILLLKFSGNEENKYDYLPASVNLMAEAIKLVFCLVMSVRVIIREGRSFKDLGCSSGASFLSYLKWSVPAFLYFLDNLIIFYVIAYLQPAMAVLFSNIVIFTTAFLFRVVLKRRLSWVQWASLIILFLSIVSLTTGNGDQHAMAVHGLHPAHISTPSNSCLKYTHLHQVHQSHNESYWSRELWDSQLIHKLNSFGLGYVLLLLQCFISALANIYNEKILKEGEQLVESIFIQNSKLYLFGLVFNSLTLLLHADYRNLTLHCGILYGHNVFSVALGFVTAALGLSVAFILKFRDNMFHVLTGQITTVVVTALSFFLFDFQPSMDFFMQAPVVLLSIFIYHSSKMKDPEYALQQERLRVINGEVFERSRGDGEELERLTKANTESESEEESF</sequence>
<accession>Q90X48</accession>
<accession>Q6PFM7</accession>
<comment type="function">
    <text evidence="1">Probable UDP-sugar:UMP transmembrane antiporter involved in UDP-alpha-D-glucuronate/UDP-GlcA, UDP-GlcNAc/UDP-N-acetyl-alpha-D-glucosamine and UDP-N-acetyl-alpha-D-galactosamine/UDP-GalNAc transport from the cytosol to the lumen of the Golgi.</text>
</comment>
<comment type="catalytic activity">
    <reaction evidence="1">
        <text>UMP(out) + UDP-alpha-D-glucuronate(in) = UMP(in) + UDP-alpha-D-glucuronate(out)</text>
        <dbReference type="Rhea" id="RHEA:72727"/>
        <dbReference type="ChEBI" id="CHEBI:57865"/>
        <dbReference type="ChEBI" id="CHEBI:58052"/>
    </reaction>
</comment>
<comment type="catalytic activity">
    <reaction evidence="1">
        <text>UMP(out) + UDP-N-acetyl-alpha-D-glucosamine(in) = UMP(in) + UDP-N-acetyl-alpha-D-glucosamine(out)</text>
        <dbReference type="Rhea" id="RHEA:72695"/>
        <dbReference type="ChEBI" id="CHEBI:57705"/>
        <dbReference type="ChEBI" id="CHEBI:57865"/>
    </reaction>
</comment>
<comment type="catalytic activity">
    <reaction evidence="1">
        <text>UDP-N-acetyl-alpha-D-galactosamine(in) + UMP(out) = UDP-N-acetyl-alpha-D-galactosamine(out) + UMP(in)</text>
        <dbReference type="Rhea" id="RHEA:72735"/>
        <dbReference type="ChEBI" id="CHEBI:57865"/>
        <dbReference type="ChEBI" id="CHEBI:67138"/>
    </reaction>
</comment>
<comment type="subunit">
    <text evidence="1">Probably forms homooligomers.</text>
</comment>
<comment type="subcellular location">
    <subcellularLocation>
        <location evidence="1">Golgi apparatus membrane</location>
        <topology evidence="2">Multi-pass membrane protein</topology>
    </subcellularLocation>
</comment>
<comment type="similarity">
    <text evidence="4">Belongs to the nucleotide-sugar transporter family. SLC35A subfamily.</text>
</comment>
<comment type="sequence caution" evidence="4">
    <conflict type="erroneous initiation">
        <sequence resource="EMBL-CDS" id="AAH57491"/>
    </conflict>
</comment>
<dbReference type="EMBL" id="AL590146">
    <property type="protein sequence ID" value="CAC94895.1"/>
    <property type="molecule type" value="Genomic_DNA"/>
</dbReference>
<dbReference type="EMBL" id="BC057491">
    <property type="protein sequence ID" value="AAH57491.1"/>
    <property type="status" value="ALT_INIT"/>
    <property type="molecule type" value="mRNA"/>
</dbReference>
<dbReference type="RefSeq" id="NP_956948.1">
    <property type="nucleotide sequence ID" value="NM_200654.1"/>
</dbReference>
<dbReference type="SMR" id="Q90X48"/>
<dbReference type="FunCoup" id="Q90X48">
    <property type="interactions" value="395"/>
</dbReference>
<dbReference type="STRING" id="7955.ENSDARP00000000004"/>
<dbReference type="GlyCosmos" id="Q90X48">
    <property type="glycosylation" value="2 sites, No reported glycans"/>
</dbReference>
<dbReference type="PaxDb" id="7955-ENSDARP00000000004"/>
<dbReference type="Ensembl" id="ENSDART00000000004">
    <property type="protein sequence ID" value="ENSDARP00000000004"/>
    <property type="gene ID" value="ENSDARG00000000001"/>
</dbReference>
<dbReference type="GeneID" id="368418"/>
<dbReference type="KEGG" id="dre:368418"/>
<dbReference type="AGR" id="ZFIN:ZDB-GENE-030616-55"/>
<dbReference type="CTD" id="55032"/>
<dbReference type="ZFIN" id="ZDB-GENE-030616-55">
    <property type="gene designation" value="slc35a5"/>
</dbReference>
<dbReference type="eggNOG" id="KOG2234">
    <property type="taxonomic scope" value="Eukaryota"/>
</dbReference>
<dbReference type="HOGENOM" id="CLU_044353_0_0_1"/>
<dbReference type="InParanoid" id="Q90X48"/>
<dbReference type="OMA" id="SCLKWAV"/>
<dbReference type="OrthoDB" id="408493at2759"/>
<dbReference type="PhylomeDB" id="Q90X48"/>
<dbReference type="TreeFam" id="TF354304"/>
<dbReference type="PRO" id="PR:Q90X48"/>
<dbReference type="Proteomes" id="UP000000437">
    <property type="component" value="Chromosome 9"/>
</dbReference>
<dbReference type="Bgee" id="ENSDARG00000000001">
    <property type="expression patterns" value="Expressed in mature ovarian follicle and 19 other cell types or tissues"/>
</dbReference>
<dbReference type="GO" id="GO:0000139">
    <property type="term" value="C:Golgi membrane"/>
    <property type="evidence" value="ECO:0000250"/>
    <property type="project" value="UniProtKB"/>
</dbReference>
<dbReference type="GO" id="GO:0015297">
    <property type="term" value="F:antiporter activity"/>
    <property type="evidence" value="ECO:0007669"/>
    <property type="project" value="UniProtKB-KW"/>
</dbReference>
<dbReference type="GO" id="GO:0015165">
    <property type="term" value="F:pyrimidine nucleotide-sugar transmembrane transporter activity"/>
    <property type="evidence" value="ECO:0000250"/>
    <property type="project" value="UniProtKB"/>
</dbReference>
<dbReference type="GO" id="GO:0022857">
    <property type="term" value="F:transmembrane transporter activity"/>
    <property type="evidence" value="ECO:0000318"/>
    <property type="project" value="GO_Central"/>
</dbReference>
<dbReference type="GO" id="GO:0055085">
    <property type="term" value="P:transmembrane transport"/>
    <property type="evidence" value="ECO:0000318"/>
    <property type="project" value="GO_Central"/>
</dbReference>
<dbReference type="InterPro" id="IPR007271">
    <property type="entry name" value="Nuc_sug_transpt"/>
</dbReference>
<dbReference type="PANTHER" id="PTHR10231">
    <property type="entry name" value="NUCLEOTIDE-SUGAR TRANSMEMBRANE TRANSPORTER"/>
    <property type="match status" value="1"/>
</dbReference>
<dbReference type="Pfam" id="PF04142">
    <property type="entry name" value="Nuc_sug_transp"/>
    <property type="match status" value="1"/>
</dbReference>
<dbReference type="PIRSF" id="PIRSF005799">
    <property type="entry name" value="UDP-gal_transpt"/>
    <property type="match status" value="1"/>
</dbReference>
<dbReference type="SUPFAM" id="SSF103481">
    <property type="entry name" value="Multidrug resistance efflux transporter EmrE"/>
    <property type="match status" value="1"/>
</dbReference>
<protein>
    <recommendedName>
        <fullName evidence="1">UDP-sugar transporter protein SLC35A5</fullName>
    </recommendedName>
    <alternativeName>
        <fullName>Solute carrier family 35 member A5</fullName>
    </alternativeName>
</protein>
<reference key="1">
    <citation type="journal article" date="2013" name="Nature">
        <title>The zebrafish reference genome sequence and its relationship to the human genome.</title>
        <authorList>
            <person name="Howe K."/>
            <person name="Clark M.D."/>
            <person name="Torroja C.F."/>
            <person name="Torrance J."/>
            <person name="Berthelot C."/>
            <person name="Muffato M."/>
            <person name="Collins J.E."/>
            <person name="Humphray S."/>
            <person name="McLaren K."/>
            <person name="Matthews L."/>
            <person name="McLaren S."/>
            <person name="Sealy I."/>
            <person name="Caccamo M."/>
            <person name="Churcher C."/>
            <person name="Scott C."/>
            <person name="Barrett J.C."/>
            <person name="Koch R."/>
            <person name="Rauch G.J."/>
            <person name="White S."/>
            <person name="Chow W."/>
            <person name="Kilian B."/>
            <person name="Quintais L.T."/>
            <person name="Guerra-Assuncao J.A."/>
            <person name="Zhou Y."/>
            <person name="Gu Y."/>
            <person name="Yen J."/>
            <person name="Vogel J.H."/>
            <person name="Eyre T."/>
            <person name="Redmond S."/>
            <person name="Banerjee R."/>
            <person name="Chi J."/>
            <person name="Fu B."/>
            <person name="Langley E."/>
            <person name="Maguire S.F."/>
            <person name="Laird G.K."/>
            <person name="Lloyd D."/>
            <person name="Kenyon E."/>
            <person name="Donaldson S."/>
            <person name="Sehra H."/>
            <person name="Almeida-King J."/>
            <person name="Loveland J."/>
            <person name="Trevanion S."/>
            <person name="Jones M."/>
            <person name="Quail M."/>
            <person name="Willey D."/>
            <person name="Hunt A."/>
            <person name="Burton J."/>
            <person name="Sims S."/>
            <person name="McLay K."/>
            <person name="Plumb B."/>
            <person name="Davis J."/>
            <person name="Clee C."/>
            <person name="Oliver K."/>
            <person name="Clark R."/>
            <person name="Riddle C."/>
            <person name="Elliot D."/>
            <person name="Threadgold G."/>
            <person name="Harden G."/>
            <person name="Ware D."/>
            <person name="Begum S."/>
            <person name="Mortimore B."/>
            <person name="Kerry G."/>
            <person name="Heath P."/>
            <person name="Phillimore B."/>
            <person name="Tracey A."/>
            <person name="Corby N."/>
            <person name="Dunn M."/>
            <person name="Johnson C."/>
            <person name="Wood J."/>
            <person name="Clark S."/>
            <person name="Pelan S."/>
            <person name="Griffiths G."/>
            <person name="Smith M."/>
            <person name="Glithero R."/>
            <person name="Howden P."/>
            <person name="Barker N."/>
            <person name="Lloyd C."/>
            <person name="Stevens C."/>
            <person name="Harley J."/>
            <person name="Holt K."/>
            <person name="Panagiotidis G."/>
            <person name="Lovell J."/>
            <person name="Beasley H."/>
            <person name="Henderson C."/>
            <person name="Gordon D."/>
            <person name="Auger K."/>
            <person name="Wright D."/>
            <person name="Collins J."/>
            <person name="Raisen C."/>
            <person name="Dyer L."/>
            <person name="Leung K."/>
            <person name="Robertson L."/>
            <person name="Ambridge K."/>
            <person name="Leongamornlert D."/>
            <person name="McGuire S."/>
            <person name="Gilderthorp R."/>
            <person name="Griffiths C."/>
            <person name="Manthravadi D."/>
            <person name="Nichol S."/>
            <person name="Barker G."/>
            <person name="Whitehead S."/>
            <person name="Kay M."/>
            <person name="Brown J."/>
            <person name="Murnane C."/>
            <person name="Gray E."/>
            <person name="Humphries M."/>
            <person name="Sycamore N."/>
            <person name="Barker D."/>
            <person name="Saunders D."/>
            <person name="Wallis J."/>
            <person name="Babbage A."/>
            <person name="Hammond S."/>
            <person name="Mashreghi-Mohammadi M."/>
            <person name="Barr L."/>
            <person name="Martin S."/>
            <person name="Wray P."/>
            <person name="Ellington A."/>
            <person name="Matthews N."/>
            <person name="Ellwood M."/>
            <person name="Woodmansey R."/>
            <person name="Clark G."/>
            <person name="Cooper J."/>
            <person name="Tromans A."/>
            <person name="Grafham D."/>
            <person name="Skuce C."/>
            <person name="Pandian R."/>
            <person name="Andrews R."/>
            <person name="Harrison E."/>
            <person name="Kimberley A."/>
            <person name="Garnett J."/>
            <person name="Fosker N."/>
            <person name="Hall R."/>
            <person name="Garner P."/>
            <person name="Kelly D."/>
            <person name="Bird C."/>
            <person name="Palmer S."/>
            <person name="Gehring I."/>
            <person name="Berger A."/>
            <person name="Dooley C.M."/>
            <person name="Ersan-Urun Z."/>
            <person name="Eser C."/>
            <person name="Geiger H."/>
            <person name="Geisler M."/>
            <person name="Karotki L."/>
            <person name="Kirn A."/>
            <person name="Konantz J."/>
            <person name="Konantz M."/>
            <person name="Oberlander M."/>
            <person name="Rudolph-Geiger S."/>
            <person name="Teucke M."/>
            <person name="Lanz C."/>
            <person name="Raddatz G."/>
            <person name="Osoegawa K."/>
            <person name="Zhu B."/>
            <person name="Rapp A."/>
            <person name="Widaa S."/>
            <person name="Langford C."/>
            <person name="Yang F."/>
            <person name="Schuster S.C."/>
            <person name="Carter N.P."/>
            <person name="Harrow J."/>
            <person name="Ning Z."/>
            <person name="Herrero J."/>
            <person name="Searle S.M."/>
            <person name="Enright A."/>
            <person name="Geisler R."/>
            <person name="Plasterk R.H."/>
            <person name="Lee C."/>
            <person name="Westerfield M."/>
            <person name="de Jong P.J."/>
            <person name="Zon L.I."/>
            <person name="Postlethwait J.H."/>
            <person name="Nusslein-Volhard C."/>
            <person name="Hubbard T.J."/>
            <person name="Roest Crollius H."/>
            <person name="Rogers J."/>
            <person name="Stemple D.L."/>
        </authorList>
    </citation>
    <scope>NUCLEOTIDE SEQUENCE [LARGE SCALE GENOMIC DNA]</scope>
    <source>
        <strain>Tuebingen</strain>
    </source>
</reference>
<reference key="2">
    <citation type="submission" date="2003-09" db="EMBL/GenBank/DDBJ databases">
        <authorList>
            <consortium name="NIH - Zebrafish Gene Collection (ZGC) project"/>
        </authorList>
    </citation>
    <scope>NUCLEOTIDE SEQUENCE [LARGE SCALE MRNA]</scope>
    <source>
        <strain>AB</strain>
    </source>
</reference>
<feature type="chain" id="PRO_0000309358" description="UDP-sugar transporter protein SLC35A5">
    <location>
        <begin position="1"/>
        <end position="440"/>
    </location>
</feature>
<feature type="topological domain" description="Cytoplasmic" evidence="4">
    <location>
        <begin position="1"/>
        <end position="34"/>
    </location>
</feature>
<feature type="transmembrane region" description="Helical" evidence="2">
    <location>
        <begin position="35"/>
        <end position="55"/>
    </location>
</feature>
<feature type="topological domain" description="Lumenal" evidence="4">
    <location>
        <begin position="56"/>
        <end position="66"/>
    </location>
</feature>
<feature type="transmembrane region" description="Helical" evidence="2">
    <location>
        <begin position="67"/>
        <end position="87"/>
    </location>
</feature>
<feature type="topological domain" description="Cytoplasmic" evidence="4">
    <location>
        <begin position="88"/>
        <end position="104"/>
    </location>
</feature>
<feature type="transmembrane region" description="Helical" evidence="2">
    <location>
        <begin position="105"/>
        <end position="125"/>
    </location>
</feature>
<feature type="topological domain" description="Lumenal" evidence="4">
    <location>
        <begin position="126"/>
        <end position="138"/>
    </location>
</feature>
<feature type="transmembrane region" description="Helical" evidence="2">
    <location>
        <begin position="139"/>
        <end position="161"/>
    </location>
</feature>
<feature type="topological domain" description="Cytoplasmic" evidence="4">
    <location>
        <begin position="162"/>
        <end position="164"/>
    </location>
</feature>
<feature type="transmembrane region" description="Helical" evidence="2">
    <location>
        <begin position="165"/>
        <end position="185"/>
    </location>
</feature>
<feature type="topological domain" description="Lumenal" evidence="4">
    <location>
        <begin position="186"/>
        <end position="243"/>
    </location>
</feature>
<feature type="transmembrane region" description="Helical" evidence="2">
    <location>
        <begin position="244"/>
        <end position="264"/>
    </location>
</feature>
<feature type="topological domain" description="Cytoplasmic" evidence="4">
    <location>
        <begin position="265"/>
        <end position="278"/>
    </location>
</feature>
<feature type="transmembrane region" description="Helical" evidence="2">
    <location>
        <begin position="279"/>
        <end position="299"/>
    </location>
</feature>
<feature type="topological domain" description="Lumenal" evidence="4">
    <location>
        <begin position="300"/>
        <end position="318"/>
    </location>
</feature>
<feature type="transmembrane region" description="Helical" evidence="2">
    <location>
        <begin position="319"/>
        <end position="339"/>
    </location>
</feature>
<feature type="topological domain" description="Cytoplasmic" evidence="4">
    <location>
        <begin position="340"/>
        <end position="345"/>
    </location>
</feature>
<feature type="transmembrane region" description="Helical" evidence="2">
    <location>
        <begin position="346"/>
        <end position="366"/>
    </location>
</feature>
<feature type="topological domain" description="Lumenal" evidence="4">
    <location>
        <position position="367"/>
    </location>
</feature>
<feature type="transmembrane region" description="Helical" evidence="2">
    <location>
        <begin position="368"/>
        <end position="388"/>
    </location>
</feature>
<feature type="topological domain" description="Cytoplasmic" evidence="4">
    <location>
        <begin position="389"/>
        <end position="440"/>
    </location>
</feature>
<feature type="region of interest" description="Disordered" evidence="3">
    <location>
        <begin position="1"/>
        <end position="22"/>
    </location>
</feature>
<feature type="region of interest" description="Disordered" evidence="3">
    <location>
        <begin position="419"/>
        <end position="440"/>
    </location>
</feature>
<feature type="compositionally biased region" description="Low complexity" evidence="3">
    <location>
        <begin position="9"/>
        <end position="19"/>
    </location>
</feature>
<feature type="glycosylation site" description="N-linked (GlcNAc...) asparagine" evidence="2">
    <location>
        <position position="224"/>
    </location>
</feature>
<feature type="glycosylation site" description="N-linked (GlcNAc...) asparagine" evidence="2">
    <location>
        <position position="306"/>
    </location>
</feature>
<feature type="sequence conflict" description="In Ref. 2; AAH57491." evidence="4" ref="2">
    <original>A</original>
    <variation>S</variation>
    <location>
        <position position="15"/>
    </location>
</feature>
<feature type="sequence conflict" description="In Ref. 2; AAH57491." evidence="4" ref="2">
    <original>S</original>
    <variation>G</variation>
    <location>
        <position position="50"/>
    </location>
</feature>
<feature type="sequence conflict" description="In Ref. 2; AAH57491." evidence="4" ref="2">
    <original>L</original>
    <variation>F</variation>
    <location>
        <position position="111"/>
    </location>
</feature>
<feature type="sequence conflict" description="In Ref. 2; AAH57491." evidence="4" ref="2">
    <original>F</original>
    <variation>L</variation>
    <location>
        <position position="155"/>
    </location>
</feature>
<feature type="sequence conflict" description="In Ref. 2; AAH57491." evidence="4" ref="2">
    <original>N</original>
    <variation>G</variation>
    <location>
        <position position="187"/>
    </location>
</feature>
<feature type="sequence conflict" description="In Ref. 2; AAH57491." evidence="4" ref="2">
    <original>M</original>
    <variation>I</variation>
    <location>
        <position position="193"/>
    </location>
</feature>
<organism>
    <name type="scientific">Danio rerio</name>
    <name type="common">Zebrafish</name>
    <name type="synonym">Brachydanio rerio</name>
    <dbReference type="NCBI Taxonomy" id="7955"/>
    <lineage>
        <taxon>Eukaryota</taxon>
        <taxon>Metazoa</taxon>
        <taxon>Chordata</taxon>
        <taxon>Craniata</taxon>
        <taxon>Vertebrata</taxon>
        <taxon>Euteleostomi</taxon>
        <taxon>Actinopterygii</taxon>
        <taxon>Neopterygii</taxon>
        <taxon>Teleostei</taxon>
        <taxon>Ostariophysi</taxon>
        <taxon>Cypriniformes</taxon>
        <taxon>Danionidae</taxon>
        <taxon>Danioninae</taxon>
        <taxon>Danio</taxon>
    </lineage>
</organism>
<proteinExistence type="evidence at transcript level"/>
<evidence type="ECO:0000250" key="1">
    <source>
        <dbReference type="UniProtKB" id="Q9BS91"/>
    </source>
</evidence>
<evidence type="ECO:0000255" key="2"/>
<evidence type="ECO:0000256" key="3">
    <source>
        <dbReference type="SAM" id="MobiDB-lite"/>
    </source>
</evidence>
<evidence type="ECO:0000305" key="4"/>